<protein>
    <recommendedName>
        <fullName evidence="1">Proteasome subunit alpha</fullName>
    </recommendedName>
    <alternativeName>
        <fullName evidence="1">20S proteasome alpha subunit</fullName>
    </alternativeName>
    <alternativeName>
        <fullName evidence="1">Proteasome core protein PsmA</fullName>
    </alternativeName>
</protein>
<reference key="1">
    <citation type="journal article" date="2008" name="Appl. Environ. Microbiol.">
        <title>The genome sequence of the metal-mobilizing, extremely thermoacidophilic archaeon Metallosphaera sedula provides insights into bioleaching-associated metabolism.</title>
        <authorList>
            <person name="Auernik K.S."/>
            <person name="Maezato Y."/>
            <person name="Blum P.H."/>
            <person name="Kelly R.M."/>
        </authorList>
    </citation>
    <scope>NUCLEOTIDE SEQUENCE [LARGE SCALE GENOMIC DNA]</scope>
    <source>
        <strain>ATCC 51363 / DSM 5348 / JCM 9185 / NBRC 15509 / TH2</strain>
    </source>
</reference>
<accession>A4YCU9</accession>
<gene>
    <name evidence="1" type="primary">psmA</name>
    <name type="ordered locus">Msed_0074</name>
</gene>
<dbReference type="EMBL" id="CP000682">
    <property type="protein sequence ID" value="ABP94251.1"/>
    <property type="molecule type" value="Genomic_DNA"/>
</dbReference>
<dbReference type="RefSeq" id="WP_011921220.1">
    <property type="nucleotide sequence ID" value="NZ_CP139956.1"/>
</dbReference>
<dbReference type="SMR" id="A4YCU9"/>
<dbReference type="STRING" id="399549.Msed_0074"/>
<dbReference type="GeneID" id="97614912"/>
<dbReference type="KEGG" id="mse:Msed_0074"/>
<dbReference type="eggNOG" id="arCOG00971">
    <property type="taxonomic scope" value="Archaea"/>
</dbReference>
<dbReference type="HOGENOM" id="CLU_035750_4_1_2"/>
<dbReference type="Proteomes" id="UP000000242">
    <property type="component" value="Chromosome"/>
</dbReference>
<dbReference type="GO" id="GO:0005737">
    <property type="term" value="C:cytoplasm"/>
    <property type="evidence" value="ECO:0007669"/>
    <property type="project" value="UniProtKB-SubCell"/>
</dbReference>
<dbReference type="GO" id="GO:0019773">
    <property type="term" value="C:proteasome core complex, alpha-subunit complex"/>
    <property type="evidence" value="ECO:0000250"/>
    <property type="project" value="UniProtKB"/>
</dbReference>
<dbReference type="GO" id="GO:0004298">
    <property type="term" value="F:threonine-type endopeptidase activity"/>
    <property type="evidence" value="ECO:0007669"/>
    <property type="project" value="InterPro"/>
</dbReference>
<dbReference type="GO" id="GO:0010498">
    <property type="term" value="P:proteasomal protein catabolic process"/>
    <property type="evidence" value="ECO:0007669"/>
    <property type="project" value="UniProtKB-UniRule"/>
</dbReference>
<dbReference type="GO" id="GO:0006511">
    <property type="term" value="P:ubiquitin-dependent protein catabolic process"/>
    <property type="evidence" value="ECO:0007669"/>
    <property type="project" value="InterPro"/>
</dbReference>
<dbReference type="CDD" id="cd03756">
    <property type="entry name" value="proteasome_alpha_archeal"/>
    <property type="match status" value="1"/>
</dbReference>
<dbReference type="FunFam" id="3.60.20.10:FF:000004">
    <property type="entry name" value="Proteasome subunit alpha type-4"/>
    <property type="match status" value="1"/>
</dbReference>
<dbReference type="Gene3D" id="3.60.20.10">
    <property type="entry name" value="Glutamine Phosphoribosylpyrophosphate, subunit 1, domain 1"/>
    <property type="match status" value="1"/>
</dbReference>
<dbReference type="HAMAP" id="MF_00289_A">
    <property type="entry name" value="Proteasome_A_A"/>
    <property type="match status" value="1"/>
</dbReference>
<dbReference type="InterPro" id="IPR029055">
    <property type="entry name" value="Ntn_hydrolases_N"/>
</dbReference>
<dbReference type="InterPro" id="IPR050115">
    <property type="entry name" value="Proteasome_alpha"/>
</dbReference>
<dbReference type="InterPro" id="IPR023332">
    <property type="entry name" value="Proteasome_alpha-type"/>
</dbReference>
<dbReference type="InterPro" id="IPR019982">
    <property type="entry name" value="Proteasome_asu_arc"/>
</dbReference>
<dbReference type="InterPro" id="IPR000426">
    <property type="entry name" value="Proteasome_asu_N"/>
</dbReference>
<dbReference type="InterPro" id="IPR001353">
    <property type="entry name" value="Proteasome_sua/b"/>
</dbReference>
<dbReference type="NCBIfam" id="TIGR03633">
    <property type="entry name" value="arc_protsome_A"/>
    <property type="match status" value="1"/>
</dbReference>
<dbReference type="NCBIfam" id="NF003075">
    <property type="entry name" value="PRK03996.1"/>
    <property type="match status" value="1"/>
</dbReference>
<dbReference type="PANTHER" id="PTHR11599">
    <property type="entry name" value="PROTEASOME SUBUNIT ALPHA/BETA"/>
    <property type="match status" value="1"/>
</dbReference>
<dbReference type="Pfam" id="PF00227">
    <property type="entry name" value="Proteasome"/>
    <property type="match status" value="1"/>
</dbReference>
<dbReference type="Pfam" id="PF10584">
    <property type="entry name" value="Proteasome_A_N"/>
    <property type="match status" value="1"/>
</dbReference>
<dbReference type="SMART" id="SM00948">
    <property type="entry name" value="Proteasome_A_N"/>
    <property type="match status" value="1"/>
</dbReference>
<dbReference type="SUPFAM" id="SSF56235">
    <property type="entry name" value="N-terminal nucleophile aminohydrolases (Ntn hydrolases)"/>
    <property type="match status" value="1"/>
</dbReference>
<dbReference type="PROSITE" id="PS00388">
    <property type="entry name" value="PROTEASOME_ALPHA_1"/>
    <property type="match status" value="1"/>
</dbReference>
<dbReference type="PROSITE" id="PS51475">
    <property type="entry name" value="PROTEASOME_ALPHA_2"/>
    <property type="match status" value="1"/>
</dbReference>
<evidence type="ECO:0000255" key="1">
    <source>
        <dbReference type="HAMAP-Rule" id="MF_00289"/>
    </source>
</evidence>
<keyword id="KW-0963">Cytoplasm</keyword>
<keyword id="KW-0647">Proteasome</keyword>
<keyword id="KW-1185">Reference proteome</keyword>
<feature type="chain" id="PRO_1000071942" description="Proteasome subunit alpha">
    <location>
        <begin position="1"/>
        <end position="240"/>
    </location>
</feature>
<organism>
    <name type="scientific">Metallosphaera sedula (strain ATCC 51363 / DSM 5348 / JCM 9185 / NBRC 15509 / TH2)</name>
    <dbReference type="NCBI Taxonomy" id="399549"/>
    <lineage>
        <taxon>Archaea</taxon>
        <taxon>Thermoproteota</taxon>
        <taxon>Thermoprotei</taxon>
        <taxon>Sulfolobales</taxon>
        <taxon>Sulfolobaceae</taxon>
        <taxon>Metallosphaera</taxon>
    </lineage>
</organism>
<name>PSA_METS5</name>
<sequence>MAFGPAAMGYDRAITIFSPDGSLYQVDYAFEAVKKGWTTLGVKTKNAVVILGEKKKASQLLDVDSIEKVFLLDDHVGCSFAGLASDGRILIDYARNSSLQHRLVYDEPISIDYLTKLISDVKQMYTQHGGVRPFGVALIVGGVDRGVTKLFMTEPSGQFMPYQAVAIGQGGYNATDYLEKNYKEDLSVEETILLALNALKVTLKPGEKLGPGNVEIGFATKEGQFRKMTLEERANYLQKI</sequence>
<comment type="function">
    <text evidence="1">Component of the proteasome core, a large protease complex with broad specificity involved in protein degradation.</text>
</comment>
<comment type="activity regulation">
    <text evidence="1">The formation of the proteasomal ATPase PAN-20S proteasome complex, via the docking of the C-termini of PAN into the intersubunit pockets in the alpha-rings, triggers opening of the gate for substrate entry. Interconversion between the open-gate and close-gate conformations leads to a dynamic regulation of the 20S proteasome proteolysis activity.</text>
</comment>
<comment type="subunit">
    <text evidence="1">The 20S proteasome core is composed of 14 alpha and 14 beta subunits that assemble into four stacked heptameric rings, resulting in a barrel-shaped structure. The two inner rings, each composed of seven catalytic beta subunits, are sandwiched by two outer rings, each composed of seven alpha subunits. The catalytic chamber with the active sites is on the inside of the barrel. Has a gated structure, the ends of the cylinder being occluded by the N-termini of the alpha-subunits. Is capped at one or both ends by the proteasome regulatory ATPase, PAN.</text>
</comment>
<comment type="subcellular location">
    <subcellularLocation>
        <location evidence="1">Cytoplasm</location>
    </subcellularLocation>
</comment>
<comment type="similarity">
    <text evidence="1">Belongs to the peptidase T1A family.</text>
</comment>
<proteinExistence type="inferred from homology"/>